<proteinExistence type="evidence at protein level"/>
<organism>
    <name type="scientific">Drosophila melanogaster</name>
    <name type="common">Fruit fly</name>
    <dbReference type="NCBI Taxonomy" id="7227"/>
    <lineage>
        <taxon>Eukaryota</taxon>
        <taxon>Metazoa</taxon>
        <taxon>Ecdysozoa</taxon>
        <taxon>Arthropoda</taxon>
        <taxon>Hexapoda</taxon>
        <taxon>Insecta</taxon>
        <taxon>Pterygota</taxon>
        <taxon>Neoptera</taxon>
        <taxon>Endopterygota</taxon>
        <taxon>Diptera</taxon>
        <taxon>Brachycera</taxon>
        <taxon>Muscomorpha</taxon>
        <taxon>Ephydroidea</taxon>
        <taxon>Drosophilidae</taxon>
        <taxon>Drosophila</taxon>
        <taxon>Sophophora</taxon>
    </lineage>
</organism>
<feature type="chain" id="PRO_0000312799" description="Protein mab-21-like">
    <location>
        <begin position="1"/>
        <end position="368"/>
    </location>
</feature>
<sequence length="368" mass="42336">MLVPPDMMAAQTRMVYQMNRFCTERVQARMYKTATAIREICKIVQDILKEVELQEPRFISSLVECNGRFEGVEVISPNEFEIVLYLNQMGVFNFVDDGTLPGCAVLKLSDGRKRSMSLWVEFITASGYLSSRKIRARFQTLVAQACDKSVYRDMVKMVGDTSEVKLRIRERFVVQITPAFKCSGIWPRSAAHWPVPHLPWPHPNIVAEVKTEGFDLLSKESVIMQNKNNNAASMEGDAWVLSFFEAENRLLQGGCRRRCLSMLKTLRDRHLDLPGNPISAYHLKNLLLYECEKHPRDFEWDEGCIADRINGIFLQLISCLQYRRCPHYFLPALDMFKGKSPSALEQAAKQVWRLTRELLTNANAFEKL</sequence>
<gene>
    <name type="ORF">CG4766</name>
</gene>
<accession>Q9Y106</accession>
<dbReference type="EMBL" id="AE014298">
    <property type="protein sequence ID" value="AAF46111.1"/>
    <property type="molecule type" value="Genomic_DNA"/>
</dbReference>
<dbReference type="EMBL" id="AF145667">
    <property type="protein sequence ID" value="AAD38642.1"/>
    <property type="molecule type" value="mRNA"/>
</dbReference>
<dbReference type="RefSeq" id="NP_572287.1">
    <property type="nucleotide sequence ID" value="NM_132059.3"/>
</dbReference>
<dbReference type="SMR" id="Q9Y106"/>
<dbReference type="BioGRID" id="58030">
    <property type="interactions" value="17"/>
</dbReference>
<dbReference type="FunCoup" id="Q9Y106">
    <property type="interactions" value="132"/>
</dbReference>
<dbReference type="IntAct" id="Q9Y106">
    <property type="interactions" value="22"/>
</dbReference>
<dbReference type="STRING" id="7227.FBpp0070856"/>
<dbReference type="PaxDb" id="7227-FBpp0070856"/>
<dbReference type="DNASU" id="31533"/>
<dbReference type="EnsemblMetazoa" id="FBtr0070891">
    <property type="protein sequence ID" value="FBpp0070856"/>
    <property type="gene ID" value="FBgn0027546"/>
</dbReference>
<dbReference type="GeneID" id="31533"/>
<dbReference type="KEGG" id="dme:Dmel_CG4766"/>
<dbReference type="UCSC" id="CG4766-RA">
    <property type="organism name" value="d. melanogaster"/>
</dbReference>
<dbReference type="AGR" id="FB:FBgn0027546"/>
<dbReference type="FlyBase" id="FBgn0027546">
    <property type="gene designation" value="CG4766"/>
</dbReference>
<dbReference type="VEuPathDB" id="VectorBase:FBgn0027546"/>
<dbReference type="eggNOG" id="KOG3963">
    <property type="taxonomic scope" value="Eukaryota"/>
</dbReference>
<dbReference type="GeneTree" id="ENSGT01050000244827"/>
<dbReference type="HOGENOM" id="CLU_045315_0_0_1"/>
<dbReference type="InParanoid" id="Q9Y106"/>
<dbReference type="OMA" id="WDESCIA"/>
<dbReference type="OrthoDB" id="5961151at2759"/>
<dbReference type="PhylomeDB" id="Q9Y106"/>
<dbReference type="BioGRID-ORCS" id="31533">
    <property type="hits" value="0 hits in 3 CRISPR screens"/>
</dbReference>
<dbReference type="GenomeRNAi" id="31533"/>
<dbReference type="PRO" id="PR:Q9Y106"/>
<dbReference type="Proteomes" id="UP000000803">
    <property type="component" value="Chromosome X"/>
</dbReference>
<dbReference type="Bgee" id="FBgn0027546">
    <property type="expression patterns" value="Expressed in second segment of antenna (Drosophila) and 29 other cell types or tissues"/>
</dbReference>
<dbReference type="ExpressionAtlas" id="Q9Y106">
    <property type="expression patterns" value="baseline and differential"/>
</dbReference>
<dbReference type="GO" id="GO:0005737">
    <property type="term" value="C:cytoplasm"/>
    <property type="evidence" value="ECO:0000250"/>
    <property type="project" value="FlyBase"/>
</dbReference>
<dbReference type="GO" id="GO:0005634">
    <property type="term" value="C:nucleus"/>
    <property type="evidence" value="ECO:0000250"/>
    <property type="project" value="FlyBase"/>
</dbReference>
<dbReference type="GO" id="GO:0001654">
    <property type="term" value="P:eye development"/>
    <property type="evidence" value="ECO:0000250"/>
    <property type="project" value="FlyBase"/>
</dbReference>
<dbReference type="FunFam" id="1.10.1410.40:FF:000002">
    <property type="entry name" value="protein mab-21-like 1"/>
    <property type="match status" value="1"/>
</dbReference>
<dbReference type="FunFam" id="3.30.460.90:FF:000001">
    <property type="entry name" value="protein mab-21-like 2"/>
    <property type="match status" value="1"/>
</dbReference>
<dbReference type="Gene3D" id="1.10.1410.40">
    <property type="match status" value="1"/>
</dbReference>
<dbReference type="Gene3D" id="3.30.460.90">
    <property type="match status" value="1"/>
</dbReference>
<dbReference type="InterPro" id="IPR046903">
    <property type="entry name" value="Mab-21-like_nuc_Trfase"/>
</dbReference>
<dbReference type="InterPro" id="IPR046906">
    <property type="entry name" value="Mab-21_HhH/H2TH-like"/>
</dbReference>
<dbReference type="InterPro" id="IPR024810">
    <property type="entry name" value="MAB21L/cGLR"/>
</dbReference>
<dbReference type="PANTHER" id="PTHR10656">
    <property type="entry name" value="CELL FATE DETERMINING PROTEIN MAB21-RELATED"/>
    <property type="match status" value="1"/>
</dbReference>
<dbReference type="PANTHER" id="PTHR10656:SF70">
    <property type="entry name" value="PROTEIN MAB-21-RELATED"/>
    <property type="match status" value="1"/>
</dbReference>
<dbReference type="Pfam" id="PF03281">
    <property type="entry name" value="Mab-21"/>
    <property type="match status" value="1"/>
</dbReference>
<dbReference type="Pfam" id="PF20266">
    <property type="entry name" value="Mab-21_C"/>
    <property type="match status" value="1"/>
</dbReference>
<dbReference type="SMART" id="SM01265">
    <property type="entry name" value="Mab-21"/>
    <property type="match status" value="1"/>
</dbReference>
<comment type="interaction">
    <interactant intactId="EBI-98298">
        <id>Q9Y106</id>
    </interactant>
    <interactant intactId="EBI-130372">
        <id>Q9VYX0</id>
        <label>c</label>
    </interactant>
    <organismsDiffer>false</organismsDiffer>
    <experiments>3</experiments>
</comment>
<comment type="similarity">
    <text evidence="1">Belongs to the mab-21 family.</text>
</comment>
<comment type="caution">
    <text evidence="1">It is uncertain whether Met-1 or Met-7 is the initiator.</text>
</comment>
<evidence type="ECO:0000305" key="1"/>
<keyword id="KW-1185">Reference proteome</keyword>
<reference key="1">
    <citation type="journal article" date="2000" name="Science">
        <title>The genome sequence of Drosophila melanogaster.</title>
        <authorList>
            <person name="Adams M.D."/>
            <person name="Celniker S.E."/>
            <person name="Holt R.A."/>
            <person name="Evans C.A."/>
            <person name="Gocayne J.D."/>
            <person name="Amanatides P.G."/>
            <person name="Scherer S.E."/>
            <person name="Li P.W."/>
            <person name="Hoskins R.A."/>
            <person name="Galle R.F."/>
            <person name="George R.A."/>
            <person name="Lewis S.E."/>
            <person name="Richards S."/>
            <person name="Ashburner M."/>
            <person name="Henderson S.N."/>
            <person name="Sutton G.G."/>
            <person name="Wortman J.R."/>
            <person name="Yandell M.D."/>
            <person name="Zhang Q."/>
            <person name="Chen L.X."/>
            <person name="Brandon R.C."/>
            <person name="Rogers Y.-H.C."/>
            <person name="Blazej R.G."/>
            <person name="Champe M."/>
            <person name="Pfeiffer B.D."/>
            <person name="Wan K.H."/>
            <person name="Doyle C."/>
            <person name="Baxter E.G."/>
            <person name="Helt G."/>
            <person name="Nelson C.R."/>
            <person name="Miklos G.L.G."/>
            <person name="Abril J.F."/>
            <person name="Agbayani A."/>
            <person name="An H.-J."/>
            <person name="Andrews-Pfannkoch C."/>
            <person name="Baldwin D."/>
            <person name="Ballew R.M."/>
            <person name="Basu A."/>
            <person name="Baxendale J."/>
            <person name="Bayraktaroglu L."/>
            <person name="Beasley E.M."/>
            <person name="Beeson K.Y."/>
            <person name="Benos P.V."/>
            <person name="Berman B.P."/>
            <person name="Bhandari D."/>
            <person name="Bolshakov S."/>
            <person name="Borkova D."/>
            <person name="Botchan M.R."/>
            <person name="Bouck J."/>
            <person name="Brokstein P."/>
            <person name="Brottier P."/>
            <person name="Burtis K.C."/>
            <person name="Busam D.A."/>
            <person name="Butler H."/>
            <person name="Cadieu E."/>
            <person name="Center A."/>
            <person name="Chandra I."/>
            <person name="Cherry J.M."/>
            <person name="Cawley S."/>
            <person name="Dahlke C."/>
            <person name="Davenport L.B."/>
            <person name="Davies P."/>
            <person name="de Pablos B."/>
            <person name="Delcher A."/>
            <person name="Deng Z."/>
            <person name="Mays A.D."/>
            <person name="Dew I."/>
            <person name="Dietz S.M."/>
            <person name="Dodson K."/>
            <person name="Doup L.E."/>
            <person name="Downes M."/>
            <person name="Dugan-Rocha S."/>
            <person name="Dunkov B.C."/>
            <person name="Dunn P."/>
            <person name="Durbin K.J."/>
            <person name="Evangelista C.C."/>
            <person name="Ferraz C."/>
            <person name="Ferriera S."/>
            <person name="Fleischmann W."/>
            <person name="Fosler C."/>
            <person name="Gabrielian A.E."/>
            <person name="Garg N.S."/>
            <person name="Gelbart W.M."/>
            <person name="Glasser K."/>
            <person name="Glodek A."/>
            <person name="Gong F."/>
            <person name="Gorrell J.H."/>
            <person name="Gu Z."/>
            <person name="Guan P."/>
            <person name="Harris M."/>
            <person name="Harris N.L."/>
            <person name="Harvey D.A."/>
            <person name="Heiman T.J."/>
            <person name="Hernandez J.R."/>
            <person name="Houck J."/>
            <person name="Hostin D."/>
            <person name="Houston K.A."/>
            <person name="Howland T.J."/>
            <person name="Wei M.-H."/>
            <person name="Ibegwam C."/>
            <person name="Jalali M."/>
            <person name="Kalush F."/>
            <person name="Karpen G.H."/>
            <person name="Ke Z."/>
            <person name="Kennison J.A."/>
            <person name="Ketchum K.A."/>
            <person name="Kimmel B.E."/>
            <person name="Kodira C.D."/>
            <person name="Kraft C.L."/>
            <person name="Kravitz S."/>
            <person name="Kulp D."/>
            <person name="Lai Z."/>
            <person name="Lasko P."/>
            <person name="Lei Y."/>
            <person name="Levitsky A.A."/>
            <person name="Li J.H."/>
            <person name="Li Z."/>
            <person name="Liang Y."/>
            <person name="Lin X."/>
            <person name="Liu X."/>
            <person name="Mattei B."/>
            <person name="McIntosh T.C."/>
            <person name="McLeod M.P."/>
            <person name="McPherson D."/>
            <person name="Merkulov G."/>
            <person name="Milshina N.V."/>
            <person name="Mobarry C."/>
            <person name="Morris J."/>
            <person name="Moshrefi A."/>
            <person name="Mount S.M."/>
            <person name="Moy M."/>
            <person name="Murphy B."/>
            <person name="Murphy L."/>
            <person name="Muzny D.M."/>
            <person name="Nelson D.L."/>
            <person name="Nelson D.R."/>
            <person name="Nelson K.A."/>
            <person name="Nixon K."/>
            <person name="Nusskern D.R."/>
            <person name="Pacleb J.M."/>
            <person name="Palazzolo M."/>
            <person name="Pittman G.S."/>
            <person name="Pan S."/>
            <person name="Pollard J."/>
            <person name="Puri V."/>
            <person name="Reese M.G."/>
            <person name="Reinert K."/>
            <person name="Remington K."/>
            <person name="Saunders R.D.C."/>
            <person name="Scheeler F."/>
            <person name="Shen H."/>
            <person name="Shue B.C."/>
            <person name="Siden-Kiamos I."/>
            <person name="Simpson M."/>
            <person name="Skupski M.P."/>
            <person name="Smith T.J."/>
            <person name="Spier E."/>
            <person name="Spradling A.C."/>
            <person name="Stapleton M."/>
            <person name="Strong R."/>
            <person name="Sun E."/>
            <person name="Svirskas R."/>
            <person name="Tector C."/>
            <person name="Turner R."/>
            <person name="Venter E."/>
            <person name="Wang A.H."/>
            <person name="Wang X."/>
            <person name="Wang Z.-Y."/>
            <person name="Wassarman D.A."/>
            <person name="Weinstock G.M."/>
            <person name="Weissenbach J."/>
            <person name="Williams S.M."/>
            <person name="Woodage T."/>
            <person name="Worley K.C."/>
            <person name="Wu D."/>
            <person name="Yang S."/>
            <person name="Yao Q.A."/>
            <person name="Ye J."/>
            <person name="Yeh R.-F."/>
            <person name="Zaveri J.S."/>
            <person name="Zhan M."/>
            <person name="Zhang G."/>
            <person name="Zhao Q."/>
            <person name="Zheng L."/>
            <person name="Zheng X.H."/>
            <person name="Zhong F.N."/>
            <person name="Zhong W."/>
            <person name="Zhou X."/>
            <person name="Zhu S.C."/>
            <person name="Zhu X."/>
            <person name="Smith H.O."/>
            <person name="Gibbs R.A."/>
            <person name="Myers E.W."/>
            <person name="Rubin G.M."/>
            <person name="Venter J.C."/>
        </authorList>
    </citation>
    <scope>NUCLEOTIDE SEQUENCE [LARGE SCALE GENOMIC DNA]</scope>
    <source>
        <strain>Berkeley</strain>
    </source>
</reference>
<reference key="2">
    <citation type="journal article" date="2002" name="Genome Biol.">
        <title>Annotation of the Drosophila melanogaster euchromatic genome: a systematic review.</title>
        <authorList>
            <person name="Misra S."/>
            <person name="Crosby M.A."/>
            <person name="Mungall C.J."/>
            <person name="Matthews B.B."/>
            <person name="Campbell K.S."/>
            <person name="Hradecky P."/>
            <person name="Huang Y."/>
            <person name="Kaminker J.S."/>
            <person name="Millburn G.H."/>
            <person name="Prochnik S.E."/>
            <person name="Smith C.D."/>
            <person name="Tupy J.L."/>
            <person name="Whitfield E.J."/>
            <person name="Bayraktaroglu L."/>
            <person name="Berman B.P."/>
            <person name="Bettencourt B.R."/>
            <person name="Celniker S.E."/>
            <person name="de Grey A.D.N.J."/>
            <person name="Drysdale R.A."/>
            <person name="Harris N.L."/>
            <person name="Richter J."/>
            <person name="Russo S."/>
            <person name="Schroeder A.J."/>
            <person name="Shu S.Q."/>
            <person name="Stapleton M."/>
            <person name="Yamada C."/>
            <person name="Ashburner M."/>
            <person name="Gelbart W.M."/>
            <person name="Rubin G.M."/>
            <person name="Lewis S.E."/>
        </authorList>
    </citation>
    <scope>GENOME REANNOTATION</scope>
    <source>
        <strain>Berkeley</strain>
    </source>
</reference>
<reference key="3">
    <citation type="journal article" date="2000" name="Science">
        <title>A Drosophila complementary DNA resource.</title>
        <authorList>
            <person name="Rubin G.M."/>
            <person name="Hong L."/>
            <person name="Brokstein P."/>
            <person name="Evans-Holm M."/>
            <person name="Frise E."/>
            <person name="Stapleton M."/>
            <person name="Harvey D.A."/>
        </authorList>
    </citation>
    <scope>NUCLEOTIDE SEQUENCE [LARGE SCALE MRNA]</scope>
</reference>
<name>MB21L_DROME</name>
<protein>
    <recommendedName>
        <fullName>Protein mab-21-like</fullName>
    </recommendedName>
</protein>